<evidence type="ECO:0000250" key="1"/>
<evidence type="ECO:0000255" key="2"/>
<evidence type="ECO:0000255" key="3">
    <source>
        <dbReference type="PROSITE-ProRule" id="PRU00409"/>
    </source>
</evidence>
<evidence type="ECO:0000255" key="4">
    <source>
        <dbReference type="PROSITE-ProRule" id="PRU01066"/>
    </source>
</evidence>
<evidence type="ECO:0000256" key="5">
    <source>
        <dbReference type="SAM" id="MobiDB-lite"/>
    </source>
</evidence>
<evidence type="ECO:0000269" key="6">
    <source>
    </source>
</evidence>
<evidence type="ECO:0000303" key="7">
    <source>
    </source>
</evidence>
<evidence type="ECO:0000305" key="8"/>
<evidence type="ECO:0007744" key="9">
    <source>
    </source>
</evidence>
<proteinExistence type="evidence at protein level"/>
<dbReference type="EC" id="6.4.1.4"/>
<dbReference type="EMBL" id="U12536">
    <property type="protein sequence ID" value="AAA67356.1"/>
    <property type="molecule type" value="mRNA"/>
</dbReference>
<dbReference type="EMBL" id="AC006550">
    <property type="protein sequence ID" value="AAD25800.1"/>
    <property type="status" value="ALT_SEQ"/>
    <property type="molecule type" value="Genomic_DNA"/>
</dbReference>
<dbReference type="EMBL" id="CP002684">
    <property type="protein sequence ID" value="AEE27527.1"/>
    <property type="molecule type" value="Genomic_DNA"/>
</dbReference>
<dbReference type="EMBL" id="CP002684">
    <property type="protein sequence ID" value="AEE27528.1"/>
    <property type="molecule type" value="Genomic_DNA"/>
</dbReference>
<dbReference type="EMBL" id="AY070723">
    <property type="protein sequence ID" value="AAL50065.1"/>
    <property type="molecule type" value="mRNA"/>
</dbReference>
<dbReference type="PIR" id="G86161">
    <property type="entry name" value="G86161"/>
</dbReference>
<dbReference type="RefSeq" id="NP_563674.1">
    <molecule id="Q42523-2"/>
    <property type="nucleotide sequence ID" value="NM_100191.4"/>
</dbReference>
<dbReference type="RefSeq" id="NP_849583.1">
    <molecule id="Q42523-1"/>
    <property type="nucleotide sequence ID" value="NM_179252.3"/>
</dbReference>
<dbReference type="SMR" id="Q42523"/>
<dbReference type="BioGRID" id="23601">
    <property type="interactions" value="2"/>
</dbReference>
<dbReference type="FunCoup" id="Q42523">
    <property type="interactions" value="3522"/>
</dbReference>
<dbReference type="STRING" id="3702.Q42523"/>
<dbReference type="iPTMnet" id="Q42523"/>
<dbReference type="PaxDb" id="3702-AT1G03090.2"/>
<dbReference type="ProteomicsDB" id="238893">
    <molecule id="Q42523-1"/>
</dbReference>
<dbReference type="EnsemblPlants" id="AT1G03090.1">
    <molecule id="Q42523-2"/>
    <property type="protein sequence ID" value="AT1G03090.1"/>
    <property type="gene ID" value="AT1G03090"/>
</dbReference>
<dbReference type="EnsemblPlants" id="AT1G03090.2">
    <molecule id="Q42523-1"/>
    <property type="protein sequence ID" value="AT1G03090.2"/>
    <property type="gene ID" value="AT1G03090"/>
</dbReference>
<dbReference type="GeneID" id="838362"/>
<dbReference type="Gramene" id="AT1G03090.1">
    <molecule id="Q42523-2"/>
    <property type="protein sequence ID" value="AT1G03090.1"/>
    <property type="gene ID" value="AT1G03090"/>
</dbReference>
<dbReference type="Gramene" id="AT1G03090.2">
    <molecule id="Q42523-1"/>
    <property type="protein sequence ID" value="AT1G03090.2"/>
    <property type="gene ID" value="AT1G03090"/>
</dbReference>
<dbReference type="KEGG" id="ath:AT1G03090"/>
<dbReference type="Araport" id="AT1G03090"/>
<dbReference type="TAIR" id="AT1G03090">
    <property type="gene designation" value="MCCA"/>
</dbReference>
<dbReference type="eggNOG" id="KOG0238">
    <property type="taxonomic scope" value="Eukaryota"/>
</dbReference>
<dbReference type="InParanoid" id="Q42523"/>
<dbReference type="OMA" id="ETHFIDH"/>
<dbReference type="PhylomeDB" id="Q42523"/>
<dbReference type="BioCyc" id="ARA:AT1G03090-MONOMER"/>
<dbReference type="BRENDA" id="6.4.1.4">
    <property type="organism ID" value="399"/>
</dbReference>
<dbReference type="UniPathway" id="UPA00363">
    <property type="reaction ID" value="UER00861"/>
</dbReference>
<dbReference type="PRO" id="PR:Q42523"/>
<dbReference type="Proteomes" id="UP000006548">
    <property type="component" value="Chromosome 1"/>
</dbReference>
<dbReference type="ExpressionAtlas" id="Q42523">
    <property type="expression patterns" value="baseline and differential"/>
</dbReference>
<dbReference type="GO" id="GO:0022626">
    <property type="term" value="C:cytosolic ribosome"/>
    <property type="evidence" value="ECO:0007005"/>
    <property type="project" value="TAIR"/>
</dbReference>
<dbReference type="GO" id="GO:0005576">
    <property type="term" value="C:extracellular region"/>
    <property type="evidence" value="ECO:0007005"/>
    <property type="project" value="TAIR"/>
</dbReference>
<dbReference type="GO" id="GO:0005759">
    <property type="term" value="C:mitochondrial matrix"/>
    <property type="evidence" value="ECO:0007669"/>
    <property type="project" value="UniProtKB-SubCell"/>
</dbReference>
<dbReference type="GO" id="GO:0005739">
    <property type="term" value="C:mitochondrion"/>
    <property type="evidence" value="ECO:0000314"/>
    <property type="project" value="TAIR"/>
</dbReference>
<dbReference type="GO" id="GO:0005524">
    <property type="term" value="F:ATP binding"/>
    <property type="evidence" value="ECO:0007669"/>
    <property type="project" value="UniProtKB-KW"/>
</dbReference>
<dbReference type="GO" id="GO:0050897">
    <property type="term" value="F:cobalt ion binding"/>
    <property type="evidence" value="ECO:0007005"/>
    <property type="project" value="TAIR"/>
</dbReference>
<dbReference type="GO" id="GO:0004485">
    <property type="term" value="F:methylcrotonoyl-CoA carboxylase activity"/>
    <property type="evidence" value="ECO:0000314"/>
    <property type="project" value="TAIR"/>
</dbReference>
<dbReference type="GO" id="GO:0006552">
    <property type="term" value="P:L-leucine catabolic process"/>
    <property type="evidence" value="ECO:0000314"/>
    <property type="project" value="TAIR"/>
</dbReference>
<dbReference type="CDD" id="cd06850">
    <property type="entry name" value="biotinyl_domain"/>
    <property type="match status" value="1"/>
</dbReference>
<dbReference type="FunFam" id="2.40.50.100:FF:000003">
    <property type="entry name" value="Acetyl-CoA carboxylase biotin carboxyl carrier protein"/>
    <property type="match status" value="1"/>
</dbReference>
<dbReference type="FunFam" id="3.30.1490.20:FF:000003">
    <property type="entry name" value="acetyl-CoA carboxylase isoform X1"/>
    <property type="match status" value="1"/>
</dbReference>
<dbReference type="FunFam" id="3.30.470.20:FF:000028">
    <property type="entry name" value="Methylcrotonoyl-CoA carboxylase subunit alpha, mitochondrial"/>
    <property type="match status" value="1"/>
</dbReference>
<dbReference type="FunFam" id="3.40.50.20:FF:000010">
    <property type="entry name" value="Propionyl-CoA carboxylase subunit alpha"/>
    <property type="match status" value="1"/>
</dbReference>
<dbReference type="Gene3D" id="2.40.50.100">
    <property type="match status" value="1"/>
</dbReference>
<dbReference type="Gene3D" id="3.30.470.20">
    <property type="entry name" value="ATP-grasp fold, B domain"/>
    <property type="match status" value="1"/>
</dbReference>
<dbReference type="InterPro" id="IPR011761">
    <property type="entry name" value="ATP-grasp"/>
</dbReference>
<dbReference type="InterPro" id="IPR005481">
    <property type="entry name" value="BC-like_N"/>
</dbReference>
<dbReference type="InterPro" id="IPR001882">
    <property type="entry name" value="Biotin_BS"/>
</dbReference>
<dbReference type="InterPro" id="IPR050856">
    <property type="entry name" value="Biotin_carboxylase_complex"/>
</dbReference>
<dbReference type="InterPro" id="IPR011764">
    <property type="entry name" value="Biotin_carboxylation_dom"/>
</dbReference>
<dbReference type="InterPro" id="IPR005482">
    <property type="entry name" value="Biotin_COase_C"/>
</dbReference>
<dbReference type="InterPro" id="IPR000089">
    <property type="entry name" value="Biotin_lipoyl"/>
</dbReference>
<dbReference type="InterPro" id="IPR005479">
    <property type="entry name" value="CbamoylP_synth_lsu-like_ATP-bd"/>
</dbReference>
<dbReference type="InterPro" id="IPR045774">
    <property type="entry name" value="MCCA_BT_dom"/>
</dbReference>
<dbReference type="InterPro" id="IPR016185">
    <property type="entry name" value="PreATP-grasp_dom_sf"/>
</dbReference>
<dbReference type="InterPro" id="IPR011054">
    <property type="entry name" value="Rudment_hybrid_motif"/>
</dbReference>
<dbReference type="InterPro" id="IPR011053">
    <property type="entry name" value="Single_hybrid_motif"/>
</dbReference>
<dbReference type="NCBIfam" id="NF006367">
    <property type="entry name" value="PRK08591.1"/>
    <property type="match status" value="1"/>
</dbReference>
<dbReference type="PANTHER" id="PTHR18866">
    <property type="entry name" value="CARBOXYLASE:PYRUVATE/ACETYL-COA/PROPIONYL-COA CARBOXYLASE"/>
    <property type="match status" value="1"/>
</dbReference>
<dbReference type="PANTHER" id="PTHR18866:SF33">
    <property type="entry name" value="METHYLCROTONOYL-COA CARBOXYLASE SUBUNIT ALPHA, MITOCHONDRIAL-RELATED"/>
    <property type="match status" value="1"/>
</dbReference>
<dbReference type="Pfam" id="PF02785">
    <property type="entry name" value="Biotin_carb_C"/>
    <property type="match status" value="1"/>
</dbReference>
<dbReference type="Pfam" id="PF00289">
    <property type="entry name" value="Biotin_carb_N"/>
    <property type="match status" value="1"/>
</dbReference>
<dbReference type="Pfam" id="PF00364">
    <property type="entry name" value="Biotin_lipoyl"/>
    <property type="match status" value="1"/>
</dbReference>
<dbReference type="Pfam" id="PF02786">
    <property type="entry name" value="CPSase_L_D2"/>
    <property type="match status" value="1"/>
</dbReference>
<dbReference type="Pfam" id="PF19331">
    <property type="entry name" value="MCCA_BT"/>
    <property type="match status" value="1"/>
</dbReference>
<dbReference type="SMART" id="SM00878">
    <property type="entry name" value="Biotin_carb_C"/>
    <property type="match status" value="1"/>
</dbReference>
<dbReference type="SUPFAM" id="SSF56059">
    <property type="entry name" value="Glutathione synthetase ATP-binding domain-like"/>
    <property type="match status" value="1"/>
</dbReference>
<dbReference type="SUPFAM" id="SSF52440">
    <property type="entry name" value="PreATP-grasp domain"/>
    <property type="match status" value="1"/>
</dbReference>
<dbReference type="SUPFAM" id="SSF51246">
    <property type="entry name" value="Rudiment single hybrid motif"/>
    <property type="match status" value="1"/>
</dbReference>
<dbReference type="SUPFAM" id="SSF51230">
    <property type="entry name" value="Single hybrid motif"/>
    <property type="match status" value="1"/>
</dbReference>
<dbReference type="PROSITE" id="PS50975">
    <property type="entry name" value="ATP_GRASP"/>
    <property type="match status" value="1"/>
</dbReference>
<dbReference type="PROSITE" id="PS50979">
    <property type="entry name" value="BC"/>
    <property type="match status" value="1"/>
</dbReference>
<dbReference type="PROSITE" id="PS00188">
    <property type="entry name" value="BIOTIN"/>
    <property type="match status" value="1"/>
</dbReference>
<dbReference type="PROSITE" id="PS50968">
    <property type="entry name" value="BIOTINYL_LIPOYL"/>
    <property type="match status" value="1"/>
</dbReference>
<dbReference type="PROSITE" id="PS00866">
    <property type="entry name" value="CPSASE_1"/>
    <property type="match status" value="1"/>
</dbReference>
<dbReference type="PROSITE" id="PS00867">
    <property type="entry name" value="CPSASE_2"/>
    <property type="match status" value="1"/>
</dbReference>
<reference key="1">
    <citation type="journal article" date="1995" name="Plant Physiol.">
        <title>Molecular cloning of the biotinylated subunit of 3-methylcrotonyl-coenzyme A carboxylase of Arabidopsis thaliana.</title>
        <authorList>
            <person name="Weaver L.M."/>
            <person name="Lebrun L."/>
            <person name="Franklin A."/>
            <person name="Huang L."/>
            <person name="Hoffman N."/>
            <person name="Wurtele E.S."/>
            <person name="Nikolau B.J."/>
        </authorList>
    </citation>
    <scope>NUCLEOTIDE SEQUENCE [MRNA] (ISOFORM 2)</scope>
    <source>
        <strain>cv. Columbia</strain>
    </source>
</reference>
<reference key="2">
    <citation type="journal article" date="2000" name="Nature">
        <title>Sequence and analysis of chromosome 1 of the plant Arabidopsis thaliana.</title>
        <authorList>
            <person name="Theologis A."/>
            <person name="Ecker J.R."/>
            <person name="Palm C.J."/>
            <person name="Federspiel N.A."/>
            <person name="Kaul S."/>
            <person name="White O."/>
            <person name="Alonso J."/>
            <person name="Altafi H."/>
            <person name="Araujo R."/>
            <person name="Bowman C.L."/>
            <person name="Brooks S.Y."/>
            <person name="Buehler E."/>
            <person name="Chan A."/>
            <person name="Chao Q."/>
            <person name="Chen H."/>
            <person name="Cheuk R.F."/>
            <person name="Chin C.W."/>
            <person name="Chung M.K."/>
            <person name="Conn L."/>
            <person name="Conway A.B."/>
            <person name="Conway A.R."/>
            <person name="Creasy T.H."/>
            <person name="Dewar K."/>
            <person name="Dunn P."/>
            <person name="Etgu P."/>
            <person name="Feldblyum T.V."/>
            <person name="Feng J.-D."/>
            <person name="Fong B."/>
            <person name="Fujii C.Y."/>
            <person name="Gill J.E."/>
            <person name="Goldsmith A.D."/>
            <person name="Haas B."/>
            <person name="Hansen N.F."/>
            <person name="Hughes B."/>
            <person name="Huizar L."/>
            <person name="Hunter J.L."/>
            <person name="Jenkins J."/>
            <person name="Johnson-Hopson C."/>
            <person name="Khan S."/>
            <person name="Khaykin E."/>
            <person name="Kim C.J."/>
            <person name="Koo H.L."/>
            <person name="Kremenetskaia I."/>
            <person name="Kurtz D.B."/>
            <person name="Kwan A."/>
            <person name="Lam B."/>
            <person name="Langin-Hooper S."/>
            <person name="Lee A."/>
            <person name="Lee J.M."/>
            <person name="Lenz C.A."/>
            <person name="Li J.H."/>
            <person name="Li Y.-P."/>
            <person name="Lin X."/>
            <person name="Liu S.X."/>
            <person name="Liu Z.A."/>
            <person name="Luros J.S."/>
            <person name="Maiti R."/>
            <person name="Marziali A."/>
            <person name="Militscher J."/>
            <person name="Miranda M."/>
            <person name="Nguyen M."/>
            <person name="Nierman W.C."/>
            <person name="Osborne B.I."/>
            <person name="Pai G."/>
            <person name="Peterson J."/>
            <person name="Pham P.K."/>
            <person name="Rizzo M."/>
            <person name="Rooney T."/>
            <person name="Rowley D."/>
            <person name="Sakano H."/>
            <person name="Salzberg S.L."/>
            <person name="Schwartz J.R."/>
            <person name="Shinn P."/>
            <person name="Southwick A.M."/>
            <person name="Sun H."/>
            <person name="Tallon L.J."/>
            <person name="Tambunga G."/>
            <person name="Toriumi M.J."/>
            <person name="Town C.D."/>
            <person name="Utterback T."/>
            <person name="Van Aken S."/>
            <person name="Vaysberg M."/>
            <person name="Vysotskaia V.S."/>
            <person name="Walker M."/>
            <person name="Wu D."/>
            <person name="Yu G."/>
            <person name="Fraser C.M."/>
            <person name="Venter J.C."/>
            <person name="Davis R.W."/>
        </authorList>
    </citation>
    <scope>NUCLEOTIDE SEQUENCE [LARGE SCALE GENOMIC DNA]</scope>
    <source>
        <strain>cv. Columbia</strain>
    </source>
</reference>
<reference key="3">
    <citation type="journal article" date="2017" name="Plant J.">
        <title>Araport11: a complete reannotation of the Arabidopsis thaliana reference genome.</title>
        <authorList>
            <person name="Cheng C.Y."/>
            <person name="Krishnakumar V."/>
            <person name="Chan A.P."/>
            <person name="Thibaud-Nissen F."/>
            <person name="Schobel S."/>
            <person name="Town C.D."/>
        </authorList>
    </citation>
    <scope>GENOME REANNOTATION</scope>
    <source>
        <strain>cv. Columbia</strain>
    </source>
</reference>
<reference key="4">
    <citation type="journal article" date="2003" name="Science">
        <title>Empirical analysis of transcriptional activity in the Arabidopsis genome.</title>
        <authorList>
            <person name="Yamada K."/>
            <person name="Lim J."/>
            <person name="Dale J.M."/>
            <person name="Chen H."/>
            <person name="Shinn P."/>
            <person name="Palm C.J."/>
            <person name="Southwick A.M."/>
            <person name="Wu H.C."/>
            <person name="Kim C.J."/>
            <person name="Nguyen M."/>
            <person name="Pham P.K."/>
            <person name="Cheuk R.F."/>
            <person name="Karlin-Newmann G."/>
            <person name="Liu S.X."/>
            <person name="Lam B."/>
            <person name="Sakano H."/>
            <person name="Wu T."/>
            <person name="Yu G."/>
            <person name="Miranda M."/>
            <person name="Quach H.L."/>
            <person name="Tripp M."/>
            <person name="Chang C.H."/>
            <person name="Lee J.M."/>
            <person name="Toriumi M.J."/>
            <person name="Chan M.M."/>
            <person name="Tang C.C."/>
            <person name="Onodera C.S."/>
            <person name="Deng J.M."/>
            <person name="Akiyama K."/>
            <person name="Ansari Y."/>
            <person name="Arakawa T."/>
            <person name="Banh J."/>
            <person name="Banno F."/>
            <person name="Bowser L."/>
            <person name="Brooks S.Y."/>
            <person name="Carninci P."/>
            <person name="Chao Q."/>
            <person name="Choy N."/>
            <person name="Enju A."/>
            <person name="Goldsmith A.D."/>
            <person name="Gurjal M."/>
            <person name="Hansen N.F."/>
            <person name="Hayashizaki Y."/>
            <person name="Johnson-Hopson C."/>
            <person name="Hsuan V.W."/>
            <person name="Iida K."/>
            <person name="Karnes M."/>
            <person name="Khan S."/>
            <person name="Koesema E."/>
            <person name="Ishida J."/>
            <person name="Jiang P.X."/>
            <person name="Jones T."/>
            <person name="Kawai J."/>
            <person name="Kamiya A."/>
            <person name="Meyers C."/>
            <person name="Nakajima M."/>
            <person name="Narusaka M."/>
            <person name="Seki M."/>
            <person name="Sakurai T."/>
            <person name="Satou M."/>
            <person name="Tamse R."/>
            <person name="Vaysberg M."/>
            <person name="Wallender E.K."/>
            <person name="Wong C."/>
            <person name="Yamamura Y."/>
            <person name="Yuan S."/>
            <person name="Shinozaki K."/>
            <person name="Davis R.W."/>
            <person name="Theologis A."/>
            <person name="Ecker J.R."/>
        </authorList>
    </citation>
    <scope>NUCLEOTIDE SEQUENCE [LARGE SCALE MRNA] (ISOFORM 1)</scope>
    <source>
        <strain>cv. Columbia</strain>
    </source>
</reference>
<reference key="5">
    <citation type="journal article" date="2000" name="J. Biol. Chem.">
        <title>Molecular characterization of the non-biotin-containing subunit of 3-methylcrotonyl-CoA carboxylase.</title>
        <authorList>
            <person name="McKean A.L."/>
            <person name="Ke J."/>
            <person name="Song J."/>
            <person name="Che P."/>
            <person name="Achenbach S."/>
            <person name="Nikolau B.J."/>
            <person name="Wurtele E.S."/>
        </authorList>
    </citation>
    <scope>TISSUE SPECIFICITY</scope>
    <source>
        <strain>cv. Columbia</strain>
        <strain>cv. Landsberg erecta</strain>
    </source>
</reference>
<reference key="6">
    <citation type="journal article" date="2009" name="Plant Physiol.">
        <title>Large-scale Arabidopsis phosphoproteome profiling reveals novel chloroplast kinase substrates and phosphorylation networks.</title>
        <authorList>
            <person name="Reiland S."/>
            <person name="Messerli G."/>
            <person name="Baerenfaller K."/>
            <person name="Gerrits B."/>
            <person name="Endler A."/>
            <person name="Grossmann J."/>
            <person name="Gruissem W."/>
            <person name="Baginsky S."/>
        </authorList>
    </citation>
    <scope>PHOSPHORYLATION [LARGE SCALE ANALYSIS] AT SER-645</scope>
    <scope>IDENTIFICATION BY MASS SPECTROMETRY [LARGE SCALE ANALYSIS]</scope>
</reference>
<sequence length="734" mass="80451">MSMMTVWALRRNVRRKNHSMLVRYISGSASMKPKEQCIEKILVANRGEIACRIMRTAKRLGIQTVAVYSDADRDSLHVKSADEAVRIGPPSARLSYLSGVTIMEAAARTGAQAIHPGYGFLSESSDFAQLCEDSGLTFIGPPASAIRDMGDKSASKRIMGAAGVPLVPGYHGHEQDIDHMKSEAEKIGYPIIIKPTHGGGGKGMRIVQSGKDFADSFLGAQREAAASFGVNTILLEKYITRPRHIEVQIFGDKHGNVLHLYERDCSVQRRHQKIIEEAPAPNISEKFRANLGQAAVSAARAVGYYNAGTVEFIVDTESDQFYFMEMNTRLQVEHPVTEMIVGQDLVEWQIRVANGEPLPLSQSEVPMSGHAFEARIYAENVPKGFLPATGVLNHYRPVAVSPSVRVETGVEQGDTVSMHYDPMIAKLVVWGGNRGEALVKLKDCLSNFQVAGVPTNINFLQKLASHKEFAVGNVETHFIEHHKSDLFADESNPAATEVAYKAVKHSAALVAACISTIEHSTWNESNHGKVPSIWYSNPPFRVHHEAKQTIELEWNNECEGTGSNLISLGVRYQPDGSYLIEEGNDSPSLELRVTRAGKCDFRVEAAGLSMNVSLAAYLKDGYKHIHIWHGSEHHQFKQKVGIEFSEDEEGVQHRTSSETSSHPPGTIVAPMAGLVVKVLVENEAKVDQGQPILVLEAMKMEHVVKAPSSGSIQDLKVKAGQQVSDGSALFRIKG</sequence>
<gene>
    <name type="primary">MCCA</name>
    <name type="ordered locus">At1g03090</name>
    <name type="ORF">F10O3.9</name>
    <name type="ORF">F10O3_8</name>
</gene>
<accession>Q42523</accession>
<accession>Q9SA61</accession>
<protein>
    <recommendedName>
        <fullName>Methylcrotonoyl-CoA carboxylase subunit alpha, mitochondrial</fullName>
        <shortName>MCCase subunit alpha</shortName>
        <ecNumber>6.4.1.4</ecNumber>
    </recommendedName>
    <alternativeName>
        <fullName>3-methylcrotonyl-CoA carboxylase 1</fullName>
    </alternativeName>
    <alternativeName>
        <fullName>3-methylcrotonyl-CoA:carbon dioxide ligase subunit alpha</fullName>
    </alternativeName>
</protein>
<comment type="function">
    <text evidence="1">Biotin-attachment subunit of the 3-methylcrotonyl-CoA carboxylase, an enzyme that catalyzes the conversion of 3-methylcrotonyl-CoA to 3-methylglutaconyl-CoA, a critical step for leucine and isovaleric acid catabolism.</text>
</comment>
<comment type="catalytic activity">
    <reaction>
        <text>3-methylbut-2-enoyl-CoA + hydrogencarbonate + ATP = 3-methyl-(2E)-glutaconyl-CoA + ADP + phosphate + H(+)</text>
        <dbReference type="Rhea" id="RHEA:13589"/>
        <dbReference type="ChEBI" id="CHEBI:15378"/>
        <dbReference type="ChEBI" id="CHEBI:17544"/>
        <dbReference type="ChEBI" id="CHEBI:30616"/>
        <dbReference type="ChEBI" id="CHEBI:43474"/>
        <dbReference type="ChEBI" id="CHEBI:57344"/>
        <dbReference type="ChEBI" id="CHEBI:57346"/>
        <dbReference type="ChEBI" id="CHEBI:456216"/>
        <dbReference type="EC" id="6.4.1.4"/>
    </reaction>
</comment>
<comment type="cofactor">
    <cofactor>
        <name>biotin</name>
        <dbReference type="ChEBI" id="CHEBI:57586"/>
    </cofactor>
</comment>
<comment type="cofactor">
    <cofactor evidence="1">
        <name>Mn(2+)</name>
        <dbReference type="ChEBI" id="CHEBI:29035"/>
    </cofactor>
    <text evidence="1">Binds 2 manganese ions per subunit.</text>
</comment>
<comment type="pathway">
    <text>Amino-acid degradation; L-leucine degradation; (S)-3-hydroxy-3-methylglutaryl-CoA from 3-isovaleryl-CoA: step 2/3.</text>
</comment>
<comment type="subunit">
    <text evidence="1">Probably a heterodimer composed of biotin-containing alpha subunits and beta subunits.</text>
</comment>
<comment type="subcellular location">
    <subcellularLocation>
        <location>Mitochondrion matrix</location>
    </subcellularLocation>
</comment>
<comment type="alternative products">
    <event type="alternative splicing"/>
    <isoform>
        <id>Q42523-1</id>
        <name>1</name>
        <sequence type="displayed"/>
    </isoform>
    <isoform>
        <id>Q42523-2</id>
        <name>2</name>
        <sequence type="described" ref="VSP_008910"/>
    </isoform>
</comment>
<comment type="tissue specificity">
    <text evidence="6">In roots, cotyledons, leaves, flowers, ovaries, siliques and embryos.</text>
</comment>
<comment type="miscellaneous">
    <text>Temporal and spatial accumulation of the alpha and beta subunits during development at approximately equal molar ratios.</text>
</comment>
<comment type="miscellaneous">
    <molecule>Isoform 2</molecule>
    <text evidence="8">May be due to exon skipping.</text>
</comment>
<comment type="sequence caution" evidence="8">
    <conflict type="erroneous gene model prediction">
        <sequence resource="EMBL-CDS" id="AAD25800"/>
    </conflict>
</comment>
<organism>
    <name type="scientific">Arabidopsis thaliana</name>
    <name type="common">Mouse-ear cress</name>
    <dbReference type="NCBI Taxonomy" id="3702"/>
    <lineage>
        <taxon>Eukaryota</taxon>
        <taxon>Viridiplantae</taxon>
        <taxon>Streptophyta</taxon>
        <taxon>Embryophyta</taxon>
        <taxon>Tracheophyta</taxon>
        <taxon>Spermatophyta</taxon>
        <taxon>Magnoliopsida</taxon>
        <taxon>eudicotyledons</taxon>
        <taxon>Gunneridae</taxon>
        <taxon>Pentapetalae</taxon>
        <taxon>rosids</taxon>
        <taxon>malvids</taxon>
        <taxon>Brassicales</taxon>
        <taxon>Brassicaceae</taxon>
        <taxon>Camelineae</taxon>
        <taxon>Arabidopsis</taxon>
    </lineage>
</organism>
<feature type="transit peptide" description="Mitochondrion" evidence="2">
    <location>
        <begin position="1"/>
        <end position="25"/>
    </location>
</feature>
<feature type="chain" id="PRO_0000002835" description="Methylcrotonoyl-CoA carboxylase subunit alpha, mitochondrial">
    <location>
        <begin position="26"/>
        <end position="734"/>
    </location>
</feature>
<feature type="domain" description="Biotin carboxylation">
    <location>
        <begin position="37"/>
        <end position="484"/>
    </location>
</feature>
<feature type="domain" description="ATP-grasp" evidence="3">
    <location>
        <begin position="156"/>
        <end position="354"/>
    </location>
</feature>
<feature type="domain" description="Biotinyl-binding" evidence="4">
    <location>
        <begin position="657"/>
        <end position="733"/>
    </location>
</feature>
<feature type="region of interest" description="Disordered" evidence="5">
    <location>
        <begin position="645"/>
        <end position="666"/>
    </location>
</feature>
<feature type="active site" evidence="1">
    <location>
        <position position="329"/>
    </location>
</feature>
<feature type="binding site" evidence="1">
    <location>
        <position position="152"/>
    </location>
    <ligand>
        <name>ATP</name>
        <dbReference type="ChEBI" id="CHEBI:30616"/>
    </ligand>
</feature>
<feature type="binding site" evidence="1">
    <location>
        <position position="236"/>
    </location>
    <ligand>
        <name>ATP</name>
        <dbReference type="ChEBI" id="CHEBI:30616"/>
    </ligand>
</feature>
<feature type="binding site" evidence="1">
    <location>
        <position position="271"/>
    </location>
    <ligand>
        <name>ATP</name>
        <dbReference type="ChEBI" id="CHEBI:30616"/>
    </ligand>
</feature>
<feature type="binding site" evidence="1">
    <location>
        <position position="311"/>
    </location>
    <ligand>
        <name>Mn(2+)</name>
        <dbReference type="ChEBI" id="CHEBI:29035"/>
        <label>1</label>
    </ligand>
</feature>
<feature type="binding site" evidence="1">
    <location>
        <position position="325"/>
    </location>
    <ligand>
        <name>Mn(2+)</name>
        <dbReference type="ChEBI" id="CHEBI:29035"/>
        <label>1</label>
    </ligand>
</feature>
<feature type="binding site" evidence="1">
    <location>
        <position position="325"/>
    </location>
    <ligand>
        <name>Mn(2+)</name>
        <dbReference type="ChEBI" id="CHEBI:29035"/>
        <label>2</label>
    </ligand>
</feature>
<feature type="binding site" evidence="1">
    <location>
        <position position="327"/>
    </location>
    <ligand>
        <name>Mn(2+)</name>
        <dbReference type="ChEBI" id="CHEBI:29035"/>
        <label>2</label>
    </ligand>
</feature>
<feature type="modified residue" description="Phosphoserine" evidence="9">
    <location>
        <position position="645"/>
    </location>
</feature>
<feature type="modified residue" description="N6-biotinyllysine" evidence="1 4">
    <location>
        <position position="699"/>
    </location>
</feature>
<feature type="splice variant" id="VSP_008910" description="In isoform 2." evidence="7">
    <location>
        <begin position="281"/>
        <end position="300"/>
    </location>
</feature>
<feature type="sequence conflict" description="In Ref. 1; AAA67356." evidence="8" ref="1">
    <original>V</original>
    <variation>D</variation>
    <location>
        <position position="85"/>
    </location>
</feature>
<feature type="sequence conflict" description="In Ref. 1; AAA67356." evidence="8" ref="1">
    <original>A</original>
    <variation>AK</variation>
    <location>
        <position position="92"/>
    </location>
</feature>
<feature type="sequence conflict" description="In Ref. 1; AAA67356." evidence="8" ref="1">
    <original>W</original>
    <variation>L</variation>
    <location>
        <position position="430"/>
    </location>
</feature>
<keyword id="KW-0025">Alternative splicing</keyword>
<keyword id="KW-0067">ATP-binding</keyword>
<keyword id="KW-0092">Biotin</keyword>
<keyword id="KW-0436">Ligase</keyword>
<keyword id="KW-0464">Manganese</keyword>
<keyword id="KW-0479">Metal-binding</keyword>
<keyword id="KW-0496">Mitochondrion</keyword>
<keyword id="KW-0547">Nucleotide-binding</keyword>
<keyword id="KW-0597">Phosphoprotein</keyword>
<keyword id="KW-1185">Reference proteome</keyword>
<keyword id="KW-0809">Transit peptide</keyword>
<name>MCCA_ARATH</name>